<protein>
    <recommendedName>
        <fullName evidence="1">Cytoplasmic trehalase</fullName>
        <ecNumber evidence="1">3.2.1.28</ecNumber>
    </recommendedName>
    <alternativeName>
        <fullName evidence="1">Alpha,alpha-trehalase</fullName>
    </alternativeName>
    <alternativeName>
        <fullName evidence="1">Alpha,alpha-trehalose glucohydrolase</fullName>
    </alternativeName>
</protein>
<dbReference type="EC" id="3.2.1.28" evidence="1"/>
<dbReference type="EMBL" id="AL513382">
    <property type="protein sequence ID" value="CAD08022.1"/>
    <property type="molecule type" value="Genomic_DNA"/>
</dbReference>
<dbReference type="EMBL" id="AE014613">
    <property type="protein sequence ID" value="AAO71388.1"/>
    <property type="molecule type" value="Genomic_DNA"/>
</dbReference>
<dbReference type="RefSeq" id="NP_458316.1">
    <property type="nucleotide sequence ID" value="NC_003198.1"/>
</dbReference>
<dbReference type="RefSeq" id="WP_000934251.1">
    <property type="nucleotide sequence ID" value="NZ_WSUR01000001.1"/>
</dbReference>
<dbReference type="SMR" id="Q8Z277"/>
<dbReference type="STRING" id="220341.gene:17588035"/>
<dbReference type="KEGG" id="stt:t3914"/>
<dbReference type="KEGG" id="sty:STY4200"/>
<dbReference type="PATRIC" id="fig|220341.7.peg.4289"/>
<dbReference type="eggNOG" id="COG1626">
    <property type="taxonomic scope" value="Bacteria"/>
</dbReference>
<dbReference type="HOGENOM" id="CLU_006451_3_1_6"/>
<dbReference type="OMA" id="DAPFGWA"/>
<dbReference type="OrthoDB" id="106887at2"/>
<dbReference type="UniPathway" id="UPA00300">
    <property type="reaction ID" value="UER00535"/>
</dbReference>
<dbReference type="Proteomes" id="UP000000541">
    <property type="component" value="Chromosome"/>
</dbReference>
<dbReference type="Proteomes" id="UP000002670">
    <property type="component" value="Chromosome"/>
</dbReference>
<dbReference type="GO" id="GO:0005737">
    <property type="term" value="C:cytoplasm"/>
    <property type="evidence" value="ECO:0007669"/>
    <property type="project" value="UniProtKB-SubCell"/>
</dbReference>
<dbReference type="GO" id="GO:0004555">
    <property type="term" value="F:alpha,alpha-trehalase activity"/>
    <property type="evidence" value="ECO:0007669"/>
    <property type="project" value="UniProtKB-UniRule"/>
</dbReference>
<dbReference type="GO" id="GO:0071474">
    <property type="term" value="P:cellular hyperosmotic response"/>
    <property type="evidence" value="ECO:0007669"/>
    <property type="project" value="InterPro"/>
</dbReference>
<dbReference type="GO" id="GO:0005993">
    <property type="term" value="P:trehalose catabolic process"/>
    <property type="evidence" value="ECO:0007669"/>
    <property type="project" value="UniProtKB-UniRule"/>
</dbReference>
<dbReference type="FunFam" id="1.50.10.10:FF:000003">
    <property type="entry name" value="Cytoplasmic trehalase"/>
    <property type="match status" value="1"/>
</dbReference>
<dbReference type="Gene3D" id="1.50.10.10">
    <property type="match status" value="1"/>
</dbReference>
<dbReference type="HAMAP" id="MF_01059">
    <property type="entry name" value="Cyt_trehalase"/>
    <property type="match status" value="1"/>
</dbReference>
<dbReference type="InterPro" id="IPR008928">
    <property type="entry name" value="6-hairpin_glycosidase_sf"/>
</dbReference>
<dbReference type="InterPro" id="IPR012341">
    <property type="entry name" value="6hp_glycosidase-like_sf"/>
</dbReference>
<dbReference type="InterPro" id="IPR023715">
    <property type="entry name" value="Cyt_trehalase"/>
</dbReference>
<dbReference type="InterPro" id="IPR001661">
    <property type="entry name" value="Glyco_hydro_37"/>
</dbReference>
<dbReference type="InterPro" id="IPR018232">
    <property type="entry name" value="Glyco_hydro_37_CS"/>
</dbReference>
<dbReference type="NCBIfam" id="NF009773">
    <property type="entry name" value="PRK13270.1"/>
    <property type="match status" value="1"/>
</dbReference>
<dbReference type="NCBIfam" id="NF009774">
    <property type="entry name" value="PRK13271.1"/>
    <property type="match status" value="1"/>
</dbReference>
<dbReference type="PANTHER" id="PTHR23403:SF8">
    <property type="entry name" value="CYTOPLASMIC TREHALASE"/>
    <property type="match status" value="1"/>
</dbReference>
<dbReference type="PANTHER" id="PTHR23403">
    <property type="entry name" value="TREHALASE"/>
    <property type="match status" value="1"/>
</dbReference>
<dbReference type="Pfam" id="PF01204">
    <property type="entry name" value="Trehalase"/>
    <property type="match status" value="1"/>
</dbReference>
<dbReference type="PRINTS" id="PR00744">
    <property type="entry name" value="GLHYDRLASE37"/>
</dbReference>
<dbReference type="SUPFAM" id="SSF48208">
    <property type="entry name" value="Six-hairpin glycosidases"/>
    <property type="match status" value="1"/>
</dbReference>
<dbReference type="PROSITE" id="PS00927">
    <property type="entry name" value="TREHALASE_1"/>
    <property type="match status" value="1"/>
</dbReference>
<dbReference type="PROSITE" id="PS00928">
    <property type="entry name" value="TREHALASE_2"/>
    <property type="match status" value="1"/>
</dbReference>
<organism>
    <name type="scientific">Salmonella typhi</name>
    <dbReference type="NCBI Taxonomy" id="90370"/>
    <lineage>
        <taxon>Bacteria</taxon>
        <taxon>Pseudomonadati</taxon>
        <taxon>Pseudomonadota</taxon>
        <taxon>Gammaproteobacteria</taxon>
        <taxon>Enterobacterales</taxon>
        <taxon>Enterobacteriaceae</taxon>
        <taxon>Salmonella</taxon>
    </lineage>
</organism>
<evidence type="ECO:0000255" key="1">
    <source>
        <dbReference type="HAMAP-Rule" id="MF_01059"/>
    </source>
</evidence>
<gene>
    <name evidence="1" type="primary">treF</name>
    <name type="ordered locus">STY4200</name>
    <name type="ordered locus">t3914</name>
</gene>
<feature type="chain" id="PRO_0000173789" description="Cytoplasmic trehalase">
    <location>
        <begin position="1"/>
        <end position="549"/>
    </location>
</feature>
<feature type="active site" description="Proton donor/acceptor" evidence="1">
    <location>
        <position position="326"/>
    </location>
</feature>
<feature type="active site" description="Proton donor/acceptor" evidence="1">
    <location>
        <position position="509"/>
    </location>
</feature>
<feature type="binding site" evidence="1">
    <location>
        <position position="168"/>
    </location>
    <ligand>
        <name>substrate</name>
    </ligand>
</feature>
<feature type="binding site" evidence="1">
    <location>
        <begin position="175"/>
        <end position="176"/>
    </location>
    <ligand>
        <name>substrate</name>
    </ligand>
</feature>
<feature type="binding site" evidence="1">
    <location>
        <position position="212"/>
    </location>
    <ligand>
        <name>substrate</name>
    </ligand>
</feature>
<feature type="binding site" evidence="1">
    <location>
        <begin position="221"/>
        <end position="223"/>
    </location>
    <ligand>
        <name>substrate</name>
    </ligand>
</feature>
<feature type="binding site" evidence="1">
    <location>
        <begin position="292"/>
        <end position="294"/>
    </location>
    <ligand>
        <name>substrate</name>
    </ligand>
</feature>
<feature type="binding site" evidence="1">
    <location>
        <position position="324"/>
    </location>
    <ligand>
        <name>substrate</name>
    </ligand>
</feature>
<feature type="binding site" evidence="1">
    <location>
        <position position="525"/>
    </location>
    <ligand>
        <name>substrate</name>
    </ligand>
</feature>
<comment type="function">
    <text evidence="1">Hydrolyzes trehalose to glucose. Could be involved, in cells returning to low osmolarity conditions, in the utilization of the accumulated cytoplasmic trehalose, which was synthesized in response to high osmolarity.</text>
</comment>
<comment type="catalytic activity">
    <reaction evidence="1">
        <text>alpha,alpha-trehalose + H2O = alpha-D-glucose + beta-D-glucose</text>
        <dbReference type="Rhea" id="RHEA:32675"/>
        <dbReference type="ChEBI" id="CHEBI:15377"/>
        <dbReference type="ChEBI" id="CHEBI:15903"/>
        <dbReference type="ChEBI" id="CHEBI:16551"/>
        <dbReference type="ChEBI" id="CHEBI:17925"/>
        <dbReference type="EC" id="3.2.1.28"/>
    </reaction>
</comment>
<comment type="pathway">
    <text evidence="1">Glycan degradation; trehalose degradation; D-glucose from alpha,alpha-trehalose: step 1/1.</text>
</comment>
<comment type="subunit">
    <text evidence="1">Monomer.</text>
</comment>
<comment type="subcellular location">
    <subcellularLocation>
        <location evidence="1">Cytoplasm</location>
    </subcellularLocation>
</comment>
<comment type="similarity">
    <text evidence="1">Belongs to the glycosyl hydrolase 37 family.</text>
</comment>
<accession>Q8Z277</accession>
<proteinExistence type="inferred from homology"/>
<name>TREF_SALTI</name>
<sequence length="549" mass="63678">MLNQKLNPTPSEDLTIDVDLFYETDPCELKLDEMIEAEPEPEMIEGLPASDALTPADRYLELFEHVQSTKLFPDSKTFPDCAPKMDPLDILIRYRKVRRHRDFDLRRFVENHFWLPETLSSEYVSNPENSLKEHIDQLWPILTREPQDHIPWSSLLALPQSYIVPGGRFSETYYWDSYFTMLGLAESGREDLLKCMADNFAWMIENYGHIPNGNRTYYLSRSQPPVFALMVELFEEDGVRGARRYLDHLKMEYAFWMDGAESLALNQAYRHVVRMPDGSLLNRYWDDRDTPRDESWLEDVETAKHSGRPPNEVYRDLRAGAASGWDYSSRWLRDAGRLASIRTTQFIPIDLNAFLYKLESAIANISALKGERDTEALFRQKASDRRAAVNHYLWDDENGCYRDYDWRREEMALFSAASIVPLYVGMANHEQADRLANVVRSRLLTPGGIMATEYETGEQWDKPNGWAPLQWMAIQGFKRYGDDMLGDEIAHNWLKTVNHFYQEHHKLIEKYHISGGTPREGGGGEYPLQDGFGWTNGVVRRLIGLYGEP</sequence>
<keyword id="KW-0963">Cytoplasm</keyword>
<keyword id="KW-0326">Glycosidase</keyword>
<keyword id="KW-0378">Hydrolase</keyword>
<reference key="1">
    <citation type="journal article" date="2001" name="Nature">
        <title>Complete genome sequence of a multiple drug resistant Salmonella enterica serovar Typhi CT18.</title>
        <authorList>
            <person name="Parkhill J."/>
            <person name="Dougan G."/>
            <person name="James K.D."/>
            <person name="Thomson N.R."/>
            <person name="Pickard D."/>
            <person name="Wain J."/>
            <person name="Churcher C.M."/>
            <person name="Mungall K.L."/>
            <person name="Bentley S.D."/>
            <person name="Holden M.T.G."/>
            <person name="Sebaihia M."/>
            <person name="Baker S."/>
            <person name="Basham D."/>
            <person name="Brooks K."/>
            <person name="Chillingworth T."/>
            <person name="Connerton P."/>
            <person name="Cronin A."/>
            <person name="Davis P."/>
            <person name="Davies R.M."/>
            <person name="Dowd L."/>
            <person name="White N."/>
            <person name="Farrar J."/>
            <person name="Feltwell T."/>
            <person name="Hamlin N."/>
            <person name="Haque A."/>
            <person name="Hien T.T."/>
            <person name="Holroyd S."/>
            <person name="Jagels K."/>
            <person name="Krogh A."/>
            <person name="Larsen T.S."/>
            <person name="Leather S."/>
            <person name="Moule S."/>
            <person name="O'Gaora P."/>
            <person name="Parry C."/>
            <person name="Quail M.A."/>
            <person name="Rutherford K.M."/>
            <person name="Simmonds M."/>
            <person name="Skelton J."/>
            <person name="Stevens K."/>
            <person name="Whitehead S."/>
            <person name="Barrell B.G."/>
        </authorList>
    </citation>
    <scope>NUCLEOTIDE SEQUENCE [LARGE SCALE GENOMIC DNA]</scope>
    <source>
        <strain>CT18</strain>
    </source>
</reference>
<reference key="2">
    <citation type="journal article" date="2003" name="J. Bacteriol.">
        <title>Comparative genomics of Salmonella enterica serovar Typhi strains Ty2 and CT18.</title>
        <authorList>
            <person name="Deng W."/>
            <person name="Liou S.-R."/>
            <person name="Plunkett G. III"/>
            <person name="Mayhew G.F."/>
            <person name="Rose D.J."/>
            <person name="Burland V."/>
            <person name="Kodoyianni V."/>
            <person name="Schwartz D.C."/>
            <person name="Blattner F.R."/>
        </authorList>
    </citation>
    <scope>NUCLEOTIDE SEQUENCE [LARGE SCALE GENOMIC DNA]</scope>
    <source>
        <strain>ATCC 700931 / Ty2</strain>
    </source>
</reference>